<feature type="chain" id="PRO_0000275717" description="Cytochrome b559 subunit alpha">
    <location>
        <begin position="1"/>
        <end position="81"/>
    </location>
</feature>
<feature type="transmembrane region" description="Helical" evidence="1">
    <location>
        <begin position="21"/>
        <end position="35"/>
    </location>
</feature>
<feature type="binding site" description="axial binding residue" evidence="1">
    <location>
        <position position="23"/>
    </location>
    <ligand>
        <name>heme</name>
        <dbReference type="ChEBI" id="CHEBI:30413"/>
        <note>ligand shared with beta subunit</note>
    </ligand>
    <ligandPart>
        <name>Fe</name>
        <dbReference type="ChEBI" id="CHEBI:18248"/>
    </ligandPart>
</feature>
<keyword id="KW-0150">Chloroplast</keyword>
<keyword id="KW-0249">Electron transport</keyword>
<keyword id="KW-0349">Heme</keyword>
<keyword id="KW-0408">Iron</keyword>
<keyword id="KW-0472">Membrane</keyword>
<keyword id="KW-0479">Metal-binding</keyword>
<keyword id="KW-0602">Photosynthesis</keyword>
<keyword id="KW-0604">Photosystem II</keyword>
<keyword id="KW-0934">Plastid</keyword>
<keyword id="KW-0793">Thylakoid</keyword>
<keyword id="KW-0812">Transmembrane</keyword>
<keyword id="KW-1133">Transmembrane helix</keyword>
<keyword id="KW-0813">Transport</keyword>
<dbReference type="EMBL" id="DQ396875">
    <property type="protein sequence ID" value="ABD48292.1"/>
    <property type="molecule type" value="Genomic_DNA"/>
</dbReference>
<dbReference type="RefSeq" id="YP_636009.1">
    <property type="nucleotide sequence ID" value="NC_008101.1"/>
</dbReference>
<dbReference type="SMR" id="Q1KVR5"/>
<dbReference type="GeneID" id="4099842"/>
<dbReference type="GO" id="GO:0009535">
    <property type="term" value="C:chloroplast thylakoid membrane"/>
    <property type="evidence" value="ECO:0007669"/>
    <property type="project" value="UniProtKB-SubCell"/>
</dbReference>
<dbReference type="GO" id="GO:0009539">
    <property type="term" value="C:photosystem II reaction center"/>
    <property type="evidence" value="ECO:0007669"/>
    <property type="project" value="InterPro"/>
</dbReference>
<dbReference type="GO" id="GO:0009055">
    <property type="term" value="F:electron transfer activity"/>
    <property type="evidence" value="ECO:0007669"/>
    <property type="project" value="UniProtKB-UniRule"/>
</dbReference>
<dbReference type="GO" id="GO:0020037">
    <property type="term" value="F:heme binding"/>
    <property type="evidence" value="ECO:0007669"/>
    <property type="project" value="InterPro"/>
</dbReference>
<dbReference type="GO" id="GO:0005506">
    <property type="term" value="F:iron ion binding"/>
    <property type="evidence" value="ECO:0007669"/>
    <property type="project" value="UniProtKB-UniRule"/>
</dbReference>
<dbReference type="GO" id="GO:0009767">
    <property type="term" value="P:photosynthetic electron transport chain"/>
    <property type="evidence" value="ECO:0007669"/>
    <property type="project" value="InterPro"/>
</dbReference>
<dbReference type="Gene3D" id="1.20.5.860">
    <property type="entry name" value="Photosystem II cytochrome b559, alpha subunit"/>
    <property type="match status" value="1"/>
</dbReference>
<dbReference type="HAMAP" id="MF_00642">
    <property type="entry name" value="PSII_PsbE"/>
    <property type="match status" value="1"/>
</dbReference>
<dbReference type="InterPro" id="IPR006217">
    <property type="entry name" value="PSII_cyt_b559_asu"/>
</dbReference>
<dbReference type="InterPro" id="IPR037025">
    <property type="entry name" value="PSII_cyt_b559_asu_sf"/>
</dbReference>
<dbReference type="InterPro" id="IPR006216">
    <property type="entry name" value="PSII_cyt_b559_CS"/>
</dbReference>
<dbReference type="InterPro" id="IPR013081">
    <property type="entry name" value="PSII_cyt_b559_N"/>
</dbReference>
<dbReference type="InterPro" id="IPR013082">
    <property type="entry name" value="PSII_cytb559_asu_lum"/>
</dbReference>
<dbReference type="NCBIfam" id="TIGR01332">
    <property type="entry name" value="cyt_b559_alpha"/>
    <property type="match status" value="1"/>
</dbReference>
<dbReference type="PANTHER" id="PTHR33391">
    <property type="entry name" value="CYTOCHROME B559 SUBUNIT BETA-RELATED"/>
    <property type="match status" value="1"/>
</dbReference>
<dbReference type="PANTHER" id="PTHR33391:SF9">
    <property type="entry name" value="CYTOCHROME B559 SUBUNIT BETA-RELATED"/>
    <property type="match status" value="1"/>
</dbReference>
<dbReference type="Pfam" id="PF00283">
    <property type="entry name" value="Cytochrom_B559"/>
    <property type="match status" value="1"/>
</dbReference>
<dbReference type="Pfam" id="PF00284">
    <property type="entry name" value="Cytochrom_B559a"/>
    <property type="match status" value="1"/>
</dbReference>
<dbReference type="PIRSF" id="PIRSF000036">
    <property type="entry name" value="PsbE"/>
    <property type="match status" value="1"/>
</dbReference>
<dbReference type="SUPFAM" id="SSF161045">
    <property type="entry name" value="Cytochrome b559 subunits"/>
    <property type="match status" value="1"/>
</dbReference>
<dbReference type="PROSITE" id="PS00537">
    <property type="entry name" value="CYTOCHROME_B559"/>
    <property type="match status" value="1"/>
</dbReference>
<geneLocation type="chloroplast"/>
<evidence type="ECO:0000255" key="1">
    <source>
        <dbReference type="HAMAP-Rule" id="MF_00642"/>
    </source>
</evidence>
<protein>
    <recommendedName>
        <fullName evidence="1">Cytochrome b559 subunit alpha</fullName>
    </recommendedName>
    <alternativeName>
        <fullName evidence="1">PSII reaction center subunit V</fullName>
    </alternativeName>
</protein>
<accession>Q1KVR5</accession>
<reference key="1">
    <citation type="journal article" date="2006" name="BMC Evol. Biol.">
        <title>The complete chloroplast genome sequence of the chlorophycean green alga Scenedesmus obliquus reveals a compact gene organization and a biased distribution of genes on the two DNA strands.</title>
        <authorList>
            <person name="de Cambiaire J.-C."/>
            <person name="Otis C."/>
            <person name="Lemieux C."/>
            <person name="Turmel M."/>
        </authorList>
    </citation>
    <scope>NUCLEOTIDE SEQUENCE [LARGE SCALE GENOMIC DNA]</scope>
    <source>
        <strain>UTEX 393</strain>
    </source>
</reference>
<proteinExistence type="inferred from homology"/>
<organism>
    <name type="scientific">Tetradesmus obliquus</name>
    <name type="common">Green alga</name>
    <name type="synonym">Acutodesmus obliquus</name>
    <dbReference type="NCBI Taxonomy" id="3088"/>
    <lineage>
        <taxon>Eukaryota</taxon>
        <taxon>Viridiplantae</taxon>
        <taxon>Chlorophyta</taxon>
        <taxon>core chlorophytes</taxon>
        <taxon>Chlorophyceae</taxon>
        <taxon>CS clade</taxon>
        <taxon>Sphaeropleales</taxon>
        <taxon>Scenedesmaceae</taxon>
        <taxon>Tetradesmus</taxon>
    </lineage>
</organism>
<sequence length="81" mass="9233">MAGKPVERPFSDILTSIRYWVIHSITIPALFIAGWLFVSTGLAYDVFGSPRPNEYFTEDRQDAPLVTDRFNALEQVKKLSQ</sequence>
<gene>
    <name evidence="1" type="primary">psbE</name>
</gene>
<name>PSBE_TETOB</name>
<comment type="function">
    <text evidence="1">This b-type cytochrome is tightly associated with the reaction center of photosystem II (PSII). PSII is a light-driven water:plastoquinone oxidoreductase that uses light energy to abstract electrons from H(2)O, generating O(2) and a proton gradient subsequently used for ATP formation. It consists of a core antenna complex that captures photons, and an electron transfer chain that converts photonic excitation into a charge separation.</text>
</comment>
<comment type="cofactor">
    <cofactor evidence="1">
        <name>heme b</name>
        <dbReference type="ChEBI" id="CHEBI:60344"/>
    </cofactor>
    <text evidence="1">With its partner (PsbF) binds heme. PSII binds additional chlorophylls, carotenoids and specific lipids.</text>
</comment>
<comment type="subunit">
    <text evidence="1">Heterodimer of an alpha subunit and a beta subunit. PSII is composed of 1 copy each of membrane proteins PsbA, PsbB, PsbC, PsbD, PsbE, PsbF, PsbH, PsbI, PsbJ, PsbK, PsbL, PsbM, PsbT, PsbX, PsbY, PsbZ, Psb30/Ycf12, at least 3 peripheral proteins of the oxygen-evolving complex and a large number of cofactors. It forms dimeric complexes.</text>
</comment>
<comment type="subcellular location">
    <subcellularLocation>
        <location evidence="1">Plastid</location>
        <location evidence="1">Chloroplast thylakoid membrane</location>
        <topology evidence="1">Single-pass membrane protein</topology>
    </subcellularLocation>
</comment>
<comment type="similarity">
    <text evidence="1">Belongs to the PsbE/PsbF family.</text>
</comment>